<gene>
    <name type="primary">Asgr1</name>
    <name type="synonym">Asgr-1</name>
</gene>
<evidence type="ECO:0000250" key="1"/>
<evidence type="ECO:0000255" key="2"/>
<evidence type="ECO:0000255" key="3">
    <source>
        <dbReference type="PROSITE-ProRule" id="PRU00040"/>
    </source>
</evidence>
<evidence type="ECO:0000256" key="4">
    <source>
        <dbReference type="SAM" id="MobiDB-lite"/>
    </source>
</evidence>
<evidence type="ECO:0000305" key="5"/>
<keyword id="KW-0106">Calcium</keyword>
<keyword id="KW-0175">Coiled coil</keyword>
<keyword id="KW-1015">Disulfide bond</keyword>
<keyword id="KW-0254">Endocytosis</keyword>
<keyword id="KW-0325">Glycoprotein</keyword>
<keyword id="KW-0430">Lectin</keyword>
<keyword id="KW-0449">Lipoprotein</keyword>
<keyword id="KW-0472">Membrane</keyword>
<keyword id="KW-0479">Metal-binding</keyword>
<keyword id="KW-0564">Palmitate</keyword>
<keyword id="KW-0597">Phosphoprotein</keyword>
<keyword id="KW-0675">Receptor</keyword>
<keyword id="KW-1185">Reference proteome</keyword>
<keyword id="KW-0735">Signal-anchor</keyword>
<keyword id="KW-0812">Transmembrane</keyword>
<keyword id="KW-1133">Transmembrane helix</keyword>
<organism>
    <name type="scientific">Mus musculus</name>
    <name type="common">Mouse</name>
    <dbReference type="NCBI Taxonomy" id="10090"/>
    <lineage>
        <taxon>Eukaryota</taxon>
        <taxon>Metazoa</taxon>
        <taxon>Chordata</taxon>
        <taxon>Craniata</taxon>
        <taxon>Vertebrata</taxon>
        <taxon>Euteleostomi</taxon>
        <taxon>Mammalia</taxon>
        <taxon>Eutheria</taxon>
        <taxon>Euarchontoglires</taxon>
        <taxon>Glires</taxon>
        <taxon>Rodentia</taxon>
        <taxon>Myomorpha</taxon>
        <taxon>Muroidea</taxon>
        <taxon>Muridae</taxon>
        <taxon>Murinae</taxon>
        <taxon>Mus</taxon>
        <taxon>Mus</taxon>
    </lineage>
</organism>
<accession>P34927</accession>
<accession>Q64363</accession>
<accession>Q91Y84</accession>
<comment type="function">
    <text>Mediates the endocytosis of plasma glycoproteins to which the terminal sialic acid residue on their complex carbohydrate moieties has been removed. The receptor recognizes terminal galactose and N-acetylgalactosamine units. After ligand binding to the receptor, the resulting complex is internalized and transported to a sorting organelle, where receptor and ligand are disassociated. The receptor then returns to the cell membrane surface.</text>
</comment>
<comment type="subunit">
    <text evidence="1">Interacts with LASS2.</text>
</comment>
<comment type="subcellular location">
    <subcellularLocation>
        <location>Membrane</location>
        <topology>Single-pass type II membrane protein</topology>
    </subcellularLocation>
</comment>
<comment type="tissue specificity">
    <text>Expressed exclusively in hepatic parenchymal cells.</text>
</comment>
<comment type="PTM">
    <text evidence="1">Phosphorylated on a cytoplasmic Ser residue.</text>
</comment>
<comment type="miscellaneous">
    <text>Calcium is required for ligand binding.</text>
</comment>
<comment type="online information" name="Functional Glycomics Gateway - Glycan Binding">
    <link uri="http://www.functionalglycomics.org/glycomics/GBPServlet?&amp;operationType=view&amp;cbpId=cbp_mou_Ctlect_162"/>
    <text>Hepatic asialoglycoprotein receptor subunit 1</text>
</comment>
<feature type="chain" id="PRO_0000046651" description="Asialoglycoprotein receptor 1">
    <location>
        <begin position="1"/>
        <end position="284"/>
    </location>
</feature>
<feature type="topological domain" description="Cytoplasmic" evidence="2">
    <location>
        <begin position="1"/>
        <end position="39"/>
    </location>
</feature>
<feature type="transmembrane region" description="Helical; Signal-anchor for type II membrane protein" evidence="2">
    <location>
        <begin position="40"/>
        <end position="60"/>
    </location>
</feature>
<feature type="topological domain" description="Extracellular" evidence="2">
    <location>
        <begin position="61"/>
        <end position="284"/>
    </location>
</feature>
<feature type="domain" description="C-type lectin" evidence="3">
    <location>
        <begin position="160"/>
        <end position="277"/>
    </location>
</feature>
<feature type="region of interest" description="Disordered" evidence="4">
    <location>
        <begin position="1"/>
        <end position="25"/>
    </location>
</feature>
<feature type="coiled-coil region" evidence="2">
    <location>
        <begin position="59"/>
        <end position="117"/>
    </location>
</feature>
<feature type="short sequence motif" description="Endocytosis signal" evidence="2">
    <location>
        <begin position="5"/>
        <end position="8"/>
    </location>
</feature>
<feature type="compositionally biased region" description="Basic and acidic residues" evidence="4">
    <location>
        <begin position="1"/>
        <end position="18"/>
    </location>
</feature>
<feature type="binding site" evidence="1">
    <location>
        <position position="190"/>
    </location>
    <ligand>
        <name>Ca(2+)</name>
        <dbReference type="ChEBI" id="CHEBI:29108"/>
        <label>1</label>
    </ligand>
</feature>
<feature type="binding site" evidence="1">
    <location>
        <position position="196"/>
    </location>
    <ligand>
        <name>Ca(2+)</name>
        <dbReference type="ChEBI" id="CHEBI:29108"/>
        <label>1</label>
    </ligand>
</feature>
<feature type="binding site" evidence="1">
    <location>
        <position position="215"/>
    </location>
    <ligand>
        <name>Ca(2+)</name>
        <dbReference type="ChEBI" id="CHEBI:29108"/>
        <label>2</label>
    </ligand>
</feature>
<feature type="binding site" evidence="1">
    <location>
        <position position="239"/>
    </location>
    <ligand>
        <name>Ca(2+)</name>
        <dbReference type="ChEBI" id="CHEBI:29108"/>
        <label>3</label>
    </ligand>
</feature>
<feature type="binding site" evidence="1">
    <location>
        <position position="241"/>
    </location>
    <ligand>
        <name>Ca(2+)</name>
        <dbReference type="ChEBI" id="CHEBI:29108"/>
        <label>3</label>
    </ligand>
</feature>
<feature type="binding site" evidence="1">
    <location>
        <position position="252"/>
    </location>
    <ligand>
        <name>Ca(2+)</name>
        <dbReference type="ChEBI" id="CHEBI:29108"/>
        <label>2</label>
    </ligand>
</feature>
<feature type="binding site" evidence="1">
    <location>
        <position position="252"/>
    </location>
    <ligand>
        <name>Ca(2+)</name>
        <dbReference type="ChEBI" id="CHEBI:29108"/>
        <label>3</label>
    </ligand>
</feature>
<feature type="binding site" evidence="1">
    <location>
        <position position="253"/>
    </location>
    <ligand>
        <name>Ca(2+)</name>
        <dbReference type="ChEBI" id="CHEBI:29108"/>
        <label>2</label>
    </ligand>
</feature>
<feature type="binding site" evidence="1">
    <location>
        <position position="264"/>
    </location>
    <ligand>
        <name>Ca(2+)</name>
        <dbReference type="ChEBI" id="CHEBI:29108"/>
        <label>3</label>
    </ligand>
</feature>
<feature type="binding site" evidence="1">
    <location>
        <position position="265"/>
    </location>
    <ligand>
        <name>Ca(2+)</name>
        <dbReference type="ChEBI" id="CHEBI:29108"/>
        <label>3</label>
    </ligand>
</feature>
<feature type="binding site" evidence="1">
    <location>
        <position position="277"/>
    </location>
    <ligand>
        <name>Ca(2+)</name>
        <dbReference type="ChEBI" id="CHEBI:29108"/>
        <label>1</label>
    </ligand>
</feature>
<feature type="lipid moiety-binding region" description="S-palmitoyl cysteine" evidence="1">
    <location>
        <position position="35"/>
    </location>
</feature>
<feature type="glycosylation site" description="N-linked (GlcNAc...) asparagine" evidence="2">
    <location>
        <position position="75"/>
    </location>
</feature>
<feature type="glycosylation site" description="N-linked (GlcNAc...) asparagine" evidence="2">
    <location>
        <position position="78"/>
    </location>
</feature>
<feature type="glycosylation site" description="N-linked (GlcNAc...) asparagine" evidence="2">
    <location>
        <position position="146"/>
    </location>
</feature>
<feature type="disulfide bond" evidence="3">
    <location>
        <begin position="153"/>
        <end position="164"/>
    </location>
</feature>
<feature type="disulfide bond" evidence="3">
    <location>
        <begin position="181"/>
        <end position="276"/>
    </location>
</feature>
<feature type="disulfide bond" evidence="3">
    <location>
        <begin position="254"/>
        <end position="268"/>
    </location>
</feature>
<feature type="sequence conflict" description="In Ref. 2; AAB60440/AAB60441." evidence="5" ref="2">
    <original>T</original>
    <variation>I</variation>
    <location>
        <position position="151"/>
    </location>
</feature>
<protein>
    <recommendedName>
        <fullName>Asialoglycoprotein receptor 1</fullName>
        <shortName>ASGP-R 1</shortName>
        <shortName>ASGPR 1</shortName>
    </recommendedName>
    <alternativeName>
        <fullName>Hepatic lectin 1</fullName>
        <shortName>HL-1</shortName>
        <shortName>mHL-1</shortName>
    </alternativeName>
</protein>
<reference key="1">
    <citation type="journal article" date="1993" name="Biochim. Biophys. Acta">
        <title>Determination of mouse major asialoglycoprotein receptor cDNA sequence.</title>
        <authorList>
            <person name="Takezawa R."/>
            <person name="Shinzawa K."/>
            <person name="Watanabe Y."/>
            <person name="Akaike T."/>
        </authorList>
    </citation>
    <scope>NUCLEOTIDE SEQUENCE [MRNA]</scope>
</reference>
<reference key="2">
    <citation type="journal article" date="1994" name="Gene">
        <title>The major form of the murine asialoglycoprotein receptor: cDNA sequence and expression in liver, testis and epididymis.</title>
        <authorList>
            <person name="Monroe R.S."/>
            <person name="Huber B.E."/>
        </authorList>
    </citation>
    <scope>NUCLEOTIDE SEQUENCE [MRNA]</scope>
    <source>
        <strain>BALB/cJ</strain>
        <tissue>Liver</tissue>
    </source>
</reference>
<reference key="3">
    <citation type="journal article" date="2000" name="Gene">
        <title>Organization of the mouse ASGR1 gene encoding the major subunit of the hepatic asialoglycoprotein receptor.</title>
        <authorList>
            <person name="Soukharev S."/>
            <person name="Berlin W."/>
            <person name="Hanover J.A."/>
            <person name="Bethke B."/>
            <person name="Sauer B."/>
        </authorList>
    </citation>
    <scope>NUCLEOTIDE SEQUENCE [GENOMIC DNA]</scope>
    <source>
        <strain>129/SvJ</strain>
        <tissue>Liver</tissue>
    </source>
</reference>
<reference key="4">
    <citation type="journal article" date="2005" name="Science">
        <title>The transcriptional landscape of the mammalian genome.</title>
        <authorList>
            <person name="Carninci P."/>
            <person name="Kasukawa T."/>
            <person name="Katayama S."/>
            <person name="Gough J."/>
            <person name="Frith M.C."/>
            <person name="Maeda N."/>
            <person name="Oyama R."/>
            <person name="Ravasi T."/>
            <person name="Lenhard B."/>
            <person name="Wells C."/>
            <person name="Kodzius R."/>
            <person name="Shimokawa K."/>
            <person name="Bajic V.B."/>
            <person name="Brenner S.E."/>
            <person name="Batalov S."/>
            <person name="Forrest A.R."/>
            <person name="Zavolan M."/>
            <person name="Davis M.J."/>
            <person name="Wilming L.G."/>
            <person name="Aidinis V."/>
            <person name="Allen J.E."/>
            <person name="Ambesi-Impiombato A."/>
            <person name="Apweiler R."/>
            <person name="Aturaliya R.N."/>
            <person name="Bailey T.L."/>
            <person name="Bansal M."/>
            <person name="Baxter L."/>
            <person name="Beisel K.W."/>
            <person name="Bersano T."/>
            <person name="Bono H."/>
            <person name="Chalk A.M."/>
            <person name="Chiu K.P."/>
            <person name="Choudhary V."/>
            <person name="Christoffels A."/>
            <person name="Clutterbuck D.R."/>
            <person name="Crowe M.L."/>
            <person name="Dalla E."/>
            <person name="Dalrymple B.P."/>
            <person name="de Bono B."/>
            <person name="Della Gatta G."/>
            <person name="di Bernardo D."/>
            <person name="Down T."/>
            <person name="Engstrom P."/>
            <person name="Fagiolini M."/>
            <person name="Faulkner G."/>
            <person name="Fletcher C.F."/>
            <person name="Fukushima T."/>
            <person name="Furuno M."/>
            <person name="Futaki S."/>
            <person name="Gariboldi M."/>
            <person name="Georgii-Hemming P."/>
            <person name="Gingeras T.R."/>
            <person name="Gojobori T."/>
            <person name="Green R.E."/>
            <person name="Gustincich S."/>
            <person name="Harbers M."/>
            <person name="Hayashi Y."/>
            <person name="Hensch T.K."/>
            <person name="Hirokawa N."/>
            <person name="Hill D."/>
            <person name="Huminiecki L."/>
            <person name="Iacono M."/>
            <person name="Ikeo K."/>
            <person name="Iwama A."/>
            <person name="Ishikawa T."/>
            <person name="Jakt M."/>
            <person name="Kanapin A."/>
            <person name="Katoh M."/>
            <person name="Kawasawa Y."/>
            <person name="Kelso J."/>
            <person name="Kitamura H."/>
            <person name="Kitano H."/>
            <person name="Kollias G."/>
            <person name="Krishnan S.P."/>
            <person name="Kruger A."/>
            <person name="Kummerfeld S.K."/>
            <person name="Kurochkin I.V."/>
            <person name="Lareau L.F."/>
            <person name="Lazarevic D."/>
            <person name="Lipovich L."/>
            <person name="Liu J."/>
            <person name="Liuni S."/>
            <person name="McWilliam S."/>
            <person name="Madan Babu M."/>
            <person name="Madera M."/>
            <person name="Marchionni L."/>
            <person name="Matsuda H."/>
            <person name="Matsuzawa S."/>
            <person name="Miki H."/>
            <person name="Mignone F."/>
            <person name="Miyake S."/>
            <person name="Morris K."/>
            <person name="Mottagui-Tabar S."/>
            <person name="Mulder N."/>
            <person name="Nakano N."/>
            <person name="Nakauchi H."/>
            <person name="Ng P."/>
            <person name="Nilsson R."/>
            <person name="Nishiguchi S."/>
            <person name="Nishikawa S."/>
            <person name="Nori F."/>
            <person name="Ohara O."/>
            <person name="Okazaki Y."/>
            <person name="Orlando V."/>
            <person name="Pang K.C."/>
            <person name="Pavan W.J."/>
            <person name="Pavesi G."/>
            <person name="Pesole G."/>
            <person name="Petrovsky N."/>
            <person name="Piazza S."/>
            <person name="Reed J."/>
            <person name="Reid J.F."/>
            <person name="Ring B.Z."/>
            <person name="Ringwald M."/>
            <person name="Rost B."/>
            <person name="Ruan Y."/>
            <person name="Salzberg S.L."/>
            <person name="Sandelin A."/>
            <person name="Schneider C."/>
            <person name="Schoenbach C."/>
            <person name="Sekiguchi K."/>
            <person name="Semple C.A."/>
            <person name="Seno S."/>
            <person name="Sessa L."/>
            <person name="Sheng Y."/>
            <person name="Shibata Y."/>
            <person name="Shimada H."/>
            <person name="Shimada K."/>
            <person name="Silva D."/>
            <person name="Sinclair B."/>
            <person name="Sperling S."/>
            <person name="Stupka E."/>
            <person name="Sugiura K."/>
            <person name="Sultana R."/>
            <person name="Takenaka Y."/>
            <person name="Taki K."/>
            <person name="Tammoja K."/>
            <person name="Tan S.L."/>
            <person name="Tang S."/>
            <person name="Taylor M.S."/>
            <person name="Tegner J."/>
            <person name="Teichmann S.A."/>
            <person name="Ueda H.R."/>
            <person name="van Nimwegen E."/>
            <person name="Verardo R."/>
            <person name="Wei C.L."/>
            <person name="Yagi K."/>
            <person name="Yamanishi H."/>
            <person name="Zabarovsky E."/>
            <person name="Zhu S."/>
            <person name="Zimmer A."/>
            <person name="Hide W."/>
            <person name="Bult C."/>
            <person name="Grimmond S.M."/>
            <person name="Teasdale R.D."/>
            <person name="Liu E.T."/>
            <person name="Brusic V."/>
            <person name="Quackenbush J."/>
            <person name="Wahlestedt C."/>
            <person name="Mattick J.S."/>
            <person name="Hume D.A."/>
            <person name="Kai C."/>
            <person name="Sasaki D."/>
            <person name="Tomaru Y."/>
            <person name="Fukuda S."/>
            <person name="Kanamori-Katayama M."/>
            <person name="Suzuki M."/>
            <person name="Aoki J."/>
            <person name="Arakawa T."/>
            <person name="Iida J."/>
            <person name="Imamura K."/>
            <person name="Itoh M."/>
            <person name="Kato T."/>
            <person name="Kawaji H."/>
            <person name="Kawagashira N."/>
            <person name="Kawashima T."/>
            <person name="Kojima M."/>
            <person name="Kondo S."/>
            <person name="Konno H."/>
            <person name="Nakano K."/>
            <person name="Ninomiya N."/>
            <person name="Nishio T."/>
            <person name="Okada M."/>
            <person name="Plessy C."/>
            <person name="Shibata K."/>
            <person name="Shiraki T."/>
            <person name="Suzuki S."/>
            <person name="Tagami M."/>
            <person name="Waki K."/>
            <person name="Watahiki A."/>
            <person name="Okamura-Oho Y."/>
            <person name="Suzuki H."/>
            <person name="Kawai J."/>
            <person name="Hayashizaki Y."/>
        </authorList>
    </citation>
    <scope>NUCLEOTIDE SEQUENCE [LARGE SCALE MRNA]</scope>
    <source>
        <strain>C57BL/6J</strain>
        <tissue>Testis</tissue>
    </source>
</reference>
<reference key="5">
    <citation type="journal article" date="2009" name="PLoS Biol.">
        <title>Lineage-specific biology revealed by a finished genome assembly of the mouse.</title>
        <authorList>
            <person name="Church D.M."/>
            <person name="Goodstadt L."/>
            <person name="Hillier L.W."/>
            <person name="Zody M.C."/>
            <person name="Goldstein S."/>
            <person name="She X."/>
            <person name="Bult C.J."/>
            <person name="Agarwala R."/>
            <person name="Cherry J.L."/>
            <person name="DiCuccio M."/>
            <person name="Hlavina W."/>
            <person name="Kapustin Y."/>
            <person name="Meric P."/>
            <person name="Maglott D."/>
            <person name="Birtle Z."/>
            <person name="Marques A.C."/>
            <person name="Graves T."/>
            <person name="Zhou S."/>
            <person name="Teague B."/>
            <person name="Potamousis K."/>
            <person name="Churas C."/>
            <person name="Place M."/>
            <person name="Herschleb J."/>
            <person name="Runnheim R."/>
            <person name="Forrest D."/>
            <person name="Amos-Landgraf J."/>
            <person name="Schwartz D.C."/>
            <person name="Cheng Z."/>
            <person name="Lindblad-Toh K."/>
            <person name="Eichler E.E."/>
            <person name="Ponting C.P."/>
        </authorList>
    </citation>
    <scope>NUCLEOTIDE SEQUENCE [LARGE SCALE GENOMIC DNA]</scope>
    <source>
        <strain>C57BL/6J</strain>
    </source>
</reference>
<reference key="6">
    <citation type="submission" date="2005-07" db="EMBL/GenBank/DDBJ databases">
        <authorList>
            <person name="Mural R.J."/>
            <person name="Adams M.D."/>
            <person name="Myers E.W."/>
            <person name="Smith H.O."/>
            <person name="Venter J.C."/>
        </authorList>
    </citation>
    <scope>NUCLEOTIDE SEQUENCE [LARGE SCALE GENOMIC DNA]</scope>
</reference>
<reference key="7">
    <citation type="journal article" date="2004" name="Genome Res.">
        <title>The status, quality, and expansion of the NIH full-length cDNA project: the Mammalian Gene Collection (MGC).</title>
        <authorList>
            <consortium name="The MGC Project Team"/>
        </authorList>
    </citation>
    <scope>NUCLEOTIDE SEQUENCE [LARGE SCALE MRNA]</scope>
    <source>
        <strain>FVB/N</strain>
        <tissue>Liver</tissue>
    </source>
</reference>
<reference key="8">
    <citation type="journal article" date="2010" name="Cell">
        <title>A tissue-specific atlas of mouse protein phosphorylation and expression.</title>
        <authorList>
            <person name="Huttlin E.L."/>
            <person name="Jedrychowski M.P."/>
            <person name="Elias J.E."/>
            <person name="Goswami T."/>
            <person name="Rad R."/>
            <person name="Beausoleil S.A."/>
            <person name="Villen J."/>
            <person name="Haas W."/>
            <person name="Sowa M.E."/>
            <person name="Gygi S.P."/>
        </authorList>
    </citation>
    <scope>IDENTIFICATION BY MASS SPECTROMETRY [LARGE SCALE ANALYSIS]</scope>
    <source>
        <tissue>Liver</tissue>
    </source>
</reference>
<proteinExistence type="evidence at protein level"/>
<sequence length="284" mass="32591">MTKDYQDFQHLDNDNDHHQLRRGPPPTPRLLQRLCSGSRLLLLSSSLSILLLVVVCVITSQNSQLREDLLALRQNFSNLTVSTEDQVKALSTQGSSVGRKMKLVESKLEKQQKDLTEDHSSLLLHVKQLVSDVRSLSCQMAAFRGNGSERTCCPINWVEYEGSCYWFSSSVRPWTEADKYCQLENAHLVVVTSRDEQNFLQRHMGPLNTWIGLTDQNGPWKWVDGTDYETGFQNWRPEQPDNWYGHGLGGGEDCAHFTTDGRWNDDVCRRPYRWVCETKLDKAN</sequence>
<name>ASGR1_MOUSE</name>
<dbReference type="EMBL" id="D13517">
    <property type="protein sequence ID" value="BAA02734.1"/>
    <property type="molecule type" value="mRNA"/>
</dbReference>
<dbReference type="EMBL" id="U09362">
    <property type="protein sequence ID" value="AAB60441.1"/>
    <property type="molecule type" value="mRNA"/>
</dbReference>
<dbReference type="EMBL" id="U08372">
    <property type="protein sequence ID" value="AAB60440.1"/>
    <property type="molecule type" value="mRNA"/>
</dbReference>
<dbReference type="EMBL" id="AF182811">
    <property type="protein sequence ID" value="AAF29495.1"/>
    <property type="molecule type" value="Genomic_DNA"/>
</dbReference>
<dbReference type="EMBL" id="AK132959">
    <property type="protein sequence ID" value="BAE21442.1"/>
    <property type="molecule type" value="mRNA"/>
</dbReference>
<dbReference type="EMBL" id="AL596185">
    <property type="status" value="NOT_ANNOTATED_CDS"/>
    <property type="molecule type" value="Genomic_DNA"/>
</dbReference>
<dbReference type="EMBL" id="CH466596">
    <property type="protein sequence ID" value="EDL12529.1"/>
    <property type="molecule type" value="Genomic_DNA"/>
</dbReference>
<dbReference type="EMBL" id="BC022106">
    <property type="protein sequence ID" value="AAH22106.1"/>
    <property type="molecule type" value="mRNA"/>
</dbReference>
<dbReference type="CCDS" id="CCDS24933.1"/>
<dbReference type="PIR" id="S29855">
    <property type="entry name" value="S29855"/>
</dbReference>
<dbReference type="RefSeq" id="NP_001278060.1">
    <property type="nucleotide sequence ID" value="NM_001291131.1"/>
</dbReference>
<dbReference type="RefSeq" id="NP_001278061.1">
    <property type="nucleotide sequence ID" value="NM_001291132.1"/>
</dbReference>
<dbReference type="RefSeq" id="NP_033844.1">
    <property type="nucleotide sequence ID" value="NM_009714.3"/>
</dbReference>
<dbReference type="RefSeq" id="XP_017169720.1">
    <property type="nucleotide sequence ID" value="XM_017314231.1"/>
</dbReference>
<dbReference type="RefSeq" id="XP_036012143.1">
    <property type="nucleotide sequence ID" value="XM_036156250.1"/>
</dbReference>
<dbReference type="SMR" id="P34927"/>
<dbReference type="BioGRID" id="198220">
    <property type="interactions" value="2"/>
</dbReference>
<dbReference type="FunCoup" id="P34927">
    <property type="interactions" value="107"/>
</dbReference>
<dbReference type="STRING" id="10090.ENSMUSP00000090637"/>
<dbReference type="BindingDB" id="P34927"/>
<dbReference type="ChEMBL" id="CHEMBL5066"/>
<dbReference type="GlyCosmos" id="P34927">
    <property type="glycosylation" value="3 sites, No reported glycans"/>
</dbReference>
<dbReference type="GlyGen" id="P34927">
    <property type="glycosylation" value="4 sites"/>
</dbReference>
<dbReference type="iPTMnet" id="P34927"/>
<dbReference type="PhosphoSitePlus" id="P34927"/>
<dbReference type="SwissPalm" id="P34927"/>
<dbReference type="jPOST" id="P34927"/>
<dbReference type="PaxDb" id="10090-ENSMUSP00000090637"/>
<dbReference type="PeptideAtlas" id="P34927"/>
<dbReference type="ProteomicsDB" id="281841"/>
<dbReference type="Antibodypedia" id="2481">
    <property type="antibodies" value="456 antibodies from 33 providers"/>
</dbReference>
<dbReference type="DNASU" id="11889"/>
<dbReference type="Ensembl" id="ENSMUST00000018699.13">
    <property type="protein sequence ID" value="ENSMUSP00000018699.7"/>
    <property type="gene ID" value="ENSMUSG00000020884.16"/>
</dbReference>
<dbReference type="Ensembl" id="ENSMUST00000092959.11">
    <property type="protein sequence ID" value="ENSMUSP00000090637.5"/>
    <property type="gene ID" value="ENSMUSG00000020884.16"/>
</dbReference>
<dbReference type="Ensembl" id="ENSMUST00000146411.9">
    <property type="protein sequence ID" value="ENSMUSP00000121842.3"/>
    <property type="gene ID" value="ENSMUSG00000020884.16"/>
</dbReference>
<dbReference type="GeneID" id="11889"/>
<dbReference type="KEGG" id="mmu:11889"/>
<dbReference type="UCSC" id="uc007jtr.2">
    <property type="organism name" value="mouse"/>
</dbReference>
<dbReference type="AGR" id="MGI:88081"/>
<dbReference type="CTD" id="432"/>
<dbReference type="MGI" id="MGI:88081">
    <property type="gene designation" value="Asgr1"/>
</dbReference>
<dbReference type="VEuPathDB" id="HostDB:ENSMUSG00000020884"/>
<dbReference type="eggNOG" id="KOG4297">
    <property type="taxonomic scope" value="Eukaryota"/>
</dbReference>
<dbReference type="GeneTree" id="ENSGT00940000161727"/>
<dbReference type="InParanoid" id="P34927"/>
<dbReference type="OMA" id="NGHQFSK"/>
<dbReference type="OrthoDB" id="2142683at2759"/>
<dbReference type="PhylomeDB" id="P34927"/>
<dbReference type="TreeFam" id="TF352155"/>
<dbReference type="Reactome" id="R-MMU-446203">
    <property type="pathway name" value="Asparagine N-linked glycosylation"/>
</dbReference>
<dbReference type="BioGRID-ORCS" id="11889">
    <property type="hits" value="3 hits in 77 CRISPR screens"/>
</dbReference>
<dbReference type="ChiTaRS" id="Asgr1">
    <property type="organism name" value="mouse"/>
</dbReference>
<dbReference type="PRO" id="PR:P34927"/>
<dbReference type="Proteomes" id="UP000000589">
    <property type="component" value="Chromosome 11"/>
</dbReference>
<dbReference type="RNAct" id="P34927">
    <property type="molecule type" value="protein"/>
</dbReference>
<dbReference type="Bgee" id="ENSMUSG00000020884">
    <property type="expression patterns" value="Expressed in left lobe of liver and 56 other cell types or tissues"/>
</dbReference>
<dbReference type="ExpressionAtlas" id="P34927">
    <property type="expression patterns" value="baseline and differential"/>
</dbReference>
<dbReference type="GO" id="GO:0016020">
    <property type="term" value="C:membrane"/>
    <property type="evidence" value="ECO:0007669"/>
    <property type="project" value="UniProtKB-SubCell"/>
</dbReference>
<dbReference type="GO" id="GO:0004873">
    <property type="term" value="F:asialoglycoprotein receptor activity"/>
    <property type="evidence" value="ECO:0007669"/>
    <property type="project" value="Ensembl"/>
</dbReference>
<dbReference type="GO" id="GO:0030246">
    <property type="term" value="F:carbohydrate binding"/>
    <property type="evidence" value="ECO:0007669"/>
    <property type="project" value="UniProtKB-KW"/>
</dbReference>
<dbReference type="GO" id="GO:0042802">
    <property type="term" value="F:identical protein binding"/>
    <property type="evidence" value="ECO:0000353"/>
    <property type="project" value="MGI"/>
</dbReference>
<dbReference type="GO" id="GO:0046872">
    <property type="term" value="F:metal ion binding"/>
    <property type="evidence" value="ECO:0007669"/>
    <property type="project" value="UniProtKB-KW"/>
</dbReference>
<dbReference type="GO" id="GO:0006897">
    <property type="term" value="P:endocytosis"/>
    <property type="evidence" value="ECO:0007669"/>
    <property type="project" value="UniProtKB-KW"/>
</dbReference>
<dbReference type="CDD" id="cd03590">
    <property type="entry name" value="CLECT_DC-SIGN_like"/>
    <property type="match status" value="1"/>
</dbReference>
<dbReference type="FunFam" id="3.10.100.10:FF:000041">
    <property type="entry name" value="Asialoglycoprotein receptor 1"/>
    <property type="match status" value="1"/>
</dbReference>
<dbReference type="Gene3D" id="3.10.100.10">
    <property type="entry name" value="Mannose-Binding Protein A, subunit A"/>
    <property type="match status" value="1"/>
</dbReference>
<dbReference type="InterPro" id="IPR001304">
    <property type="entry name" value="C-type_lectin-like"/>
</dbReference>
<dbReference type="InterPro" id="IPR016186">
    <property type="entry name" value="C-type_lectin-like/link_sf"/>
</dbReference>
<dbReference type="InterPro" id="IPR050111">
    <property type="entry name" value="C-type_lectin/snaclec_domain"/>
</dbReference>
<dbReference type="InterPro" id="IPR018378">
    <property type="entry name" value="C-type_lectin_CS"/>
</dbReference>
<dbReference type="InterPro" id="IPR033989">
    <property type="entry name" value="CD209-like_CTLD"/>
</dbReference>
<dbReference type="InterPro" id="IPR016187">
    <property type="entry name" value="CTDL_fold"/>
</dbReference>
<dbReference type="PANTHER" id="PTHR22803">
    <property type="entry name" value="MANNOSE, PHOSPHOLIPASE, LECTIN RECEPTOR RELATED"/>
    <property type="match status" value="1"/>
</dbReference>
<dbReference type="Pfam" id="PF00059">
    <property type="entry name" value="Lectin_C"/>
    <property type="match status" value="1"/>
</dbReference>
<dbReference type="Pfam" id="PF03954">
    <property type="entry name" value="Lectin_N"/>
    <property type="match status" value="1"/>
</dbReference>
<dbReference type="SMART" id="SM00034">
    <property type="entry name" value="CLECT"/>
    <property type="match status" value="1"/>
</dbReference>
<dbReference type="SUPFAM" id="SSF56436">
    <property type="entry name" value="C-type lectin-like"/>
    <property type="match status" value="1"/>
</dbReference>
<dbReference type="PROSITE" id="PS00615">
    <property type="entry name" value="C_TYPE_LECTIN_1"/>
    <property type="match status" value="1"/>
</dbReference>
<dbReference type="PROSITE" id="PS50041">
    <property type="entry name" value="C_TYPE_LECTIN_2"/>
    <property type="match status" value="1"/>
</dbReference>